<dbReference type="EC" id="3.6.5.-" evidence="1"/>
<dbReference type="EMBL" id="CP000563">
    <property type="protein sequence ID" value="ABN60493.1"/>
    <property type="molecule type" value="Genomic_DNA"/>
</dbReference>
<dbReference type="SMR" id="A3D180"/>
<dbReference type="STRING" id="325240.Sbal_0969"/>
<dbReference type="KEGG" id="sbl:Sbal_0969"/>
<dbReference type="HOGENOM" id="CLU_011747_2_0_6"/>
<dbReference type="OrthoDB" id="9807318at2"/>
<dbReference type="Proteomes" id="UP000001557">
    <property type="component" value="Chromosome"/>
</dbReference>
<dbReference type="GO" id="GO:0005737">
    <property type="term" value="C:cytoplasm"/>
    <property type="evidence" value="ECO:0007669"/>
    <property type="project" value="UniProtKB-SubCell"/>
</dbReference>
<dbReference type="GO" id="GO:0005525">
    <property type="term" value="F:GTP binding"/>
    <property type="evidence" value="ECO:0007669"/>
    <property type="project" value="UniProtKB-UniRule"/>
</dbReference>
<dbReference type="GO" id="GO:0003924">
    <property type="term" value="F:GTPase activity"/>
    <property type="evidence" value="ECO:0007669"/>
    <property type="project" value="UniProtKB-UniRule"/>
</dbReference>
<dbReference type="GO" id="GO:0000287">
    <property type="term" value="F:magnesium ion binding"/>
    <property type="evidence" value="ECO:0007669"/>
    <property type="project" value="InterPro"/>
</dbReference>
<dbReference type="GO" id="GO:0042254">
    <property type="term" value="P:ribosome biogenesis"/>
    <property type="evidence" value="ECO:0007669"/>
    <property type="project" value="UniProtKB-UniRule"/>
</dbReference>
<dbReference type="CDD" id="cd01898">
    <property type="entry name" value="Obg"/>
    <property type="match status" value="1"/>
</dbReference>
<dbReference type="FunFam" id="2.70.210.12:FF:000001">
    <property type="entry name" value="GTPase Obg"/>
    <property type="match status" value="1"/>
</dbReference>
<dbReference type="Gene3D" id="2.70.210.12">
    <property type="entry name" value="GTP1/OBG domain"/>
    <property type="match status" value="1"/>
</dbReference>
<dbReference type="Gene3D" id="3.40.50.300">
    <property type="entry name" value="P-loop containing nucleotide triphosphate hydrolases"/>
    <property type="match status" value="1"/>
</dbReference>
<dbReference type="HAMAP" id="MF_01454">
    <property type="entry name" value="GTPase_Obg"/>
    <property type="match status" value="1"/>
</dbReference>
<dbReference type="InterPro" id="IPR031167">
    <property type="entry name" value="G_OBG"/>
</dbReference>
<dbReference type="InterPro" id="IPR006073">
    <property type="entry name" value="GTP-bd"/>
</dbReference>
<dbReference type="InterPro" id="IPR014100">
    <property type="entry name" value="GTP-bd_Obg/CgtA"/>
</dbReference>
<dbReference type="InterPro" id="IPR006074">
    <property type="entry name" value="GTP1-OBG_CS"/>
</dbReference>
<dbReference type="InterPro" id="IPR006169">
    <property type="entry name" value="GTP1_OBG_dom"/>
</dbReference>
<dbReference type="InterPro" id="IPR036726">
    <property type="entry name" value="GTP1_OBG_dom_sf"/>
</dbReference>
<dbReference type="InterPro" id="IPR045086">
    <property type="entry name" value="OBG_GTPase"/>
</dbReference>
<dbReference type="InterPro" id="IPR027417">
    <property type="entry name" value="P-loop_NTPase"/>
</dbReference>
<dbReference type="NCBIfam" id="TIGR02729">
    <property type="entry name" value="Obg_CgtA"/>
    <property type="match status" value="1"/>
</dbReference>
<dbReference type="NCBIfam" id="NF008955">
    <property type="entry name" value="PRK12297.1"/>
    <property type="match status" value="1"/>
</dbReference>
<dbReference type="NCBIfam" id="NF008956">
    <property type="entry name" value="PRK12299.1"/>
    <property type="match status" value="1"/>
</dbReference>
<dbReference type="PANTHER" id="PTHR11702">
    <property type="entry name" value="DEVELOPMENTALLY REGULATED GTP-BINDING PROTEIN-RELATED"/>
    <property type="match status" value="1"/>
</dbReference>
<dbReference type="PANTHER" id="PTHR11702:SF31">
    <property type="entry name" value="MITOCHONDRIAL RIBOSOME-ASSOCIATED GTPASE 2"/>
    <property type="match status" value="1"/>
</dbReference>
<dbReference type="Pfam" id="PF01018">
    <property type="entry name" value="GTP1_OBG"/>
    <property type="match status" value="1"/>
</dbReference>
<dbReference type="Pfam" id="PF01926">
    <property type="entry name" value="MMR_HSR1"/>
    <property type="match status" value="1"/>
</dbReference>
<dbReference type="PIRSF" id="PIRSF002401">
    <property type="entry name" value="GTP_bd_Obg/CgtA"/>
    <property type="match status" value="1"/>
</dbReference>
<dbReference type="PRINTS" id="PR00326">
    <property type="entry name" value="GTP1OBG"/>
</dbReference>
<dbReference type="SUPFAM" id="SSF82051">
    <property type="entry name" value="Obg GTP-binding protein N-terminal domain"/>
    <property type="match status" value="1"/>
</dbReference>
<dbReference type="SUPFAM" id="SSF52540">
    <property type="entry name" value="P-loop containing nucleoside triphosphate hydrolases"/>
    <property type="match status" value="1"/>
</dbReference>
<dbReference type="PROSITE" id="PS51710">
    <property type="entry name" value="G_OBG"/>
    <property type="match status" value="1"/>
</dbReference>
<dbReference type="PROSITE" id="PS00905">
    <property type="entry name" value="GTP1_OBG"/>
    <property type="match status" value="1"/>
</dbReference>
<dbReference type="PROSITE" id="PS51883">
    <property type="entry name" value="OBG"/>
    <property type="match status" value="1"/>
</dbReference>
<keyword id="KW-0963">Cytoplasm</keyword>
<keyword id="KW-0342">GTP-binding</keyword>
<keyword id="KW-0378">Hydrolase</keyword>
<keyword id="KW-0460">Magnesium</keyword>
<keyword id="KW-0479">Metal-binding</keyword>
<keyword id="KW-0547">Nucleotide-binding</keyword>
<keyword id="KW-1185">Reference proteome</keyword>
<sequence>MKFVDEAVIRVEAGDGGSGCVSFRREKYVPDGGPDGGDGGDGGSVFLQADENFNTLIEFRFERFHMAERGENGRGRDCTGHSGKDLILKVPVGTRAVDHDTEEVLGDLTTHGQKLLVAKGGFHGLGNTRFKSSTNRAPRQKTLGTPGEVRSLKLELLLLADVGLLGMPNAGKSTFIRAVSRATPKVADYPFTTLVPNLGVVNPRPGQSFVIADIPGLIEGAADGAGLGIRFLKHLERCRILLHIIDIEPIDGTDPVESARAIVGELEKYSPKLASKPRWLVFNKTDLLLEEELQQKVDRIVKEMGWEGDVYTISAYNRDGTNELALKLLDYIASLPPEDNEIDPDSEVEFKWDNYHQANLDSVNEDYVDEDDDDDFDDDDYDVEVIYQR</sequence>
<gene>
    <name evidence="1" type="primary">obg</name>
    <name type="ordered locus">Sbal_0969</name>
</gene>
<comment type="function">
    <text evidence="1">An essential GTPase which binds GTP, GDP and possibly (p)ppGpp with moderate affinity, with high nucleotide exchange rates and a fairly low GTP hydrolysis rate. Plays a role in control of the cell cycle, stress response, ribosome biogenesis and in those bacteria that undergo differentiation, in morphogenesis control.</text>
</comment>
<comment type="cofactor">
    <cofactor evidence="1">
        <name>Mg(2+)</name>
        <dbReference type="ChEBI" id="CHEBI:18420"/>
    </cofactor>
</comment>
<comment type="subunit">
    <text evidence="1">Monomer.</text>
</comment>
<comment type="subcellular location">
    <subcellularLocation>
        <location evidence="1">Cytoplasm</location>
    </subcellularLocation>
</comment>
<comment type="similarity">
    <text evidence="1">Belongs to the TRAFAC class OBG-HflX-like GTPase superfamily. OBG GTPase family.</text>
</comment>
<name>OBG_SHEB5</name>
<protein>
    <recommendedName>
        <fullName evidence="1">GTPase Obg</fullName>
        <ecNumber evidence="1">3.6.5.-</ecNumber>
    </recommendedName>
    <alternativeName>
        <fullName evidence="1">GTP-binding protein Obg</fullName>
    </alternativeName>
</protein>
<proteinExistence type="inferred from homology"/>
<reference key="1">
    <citation type="submission" date="2007-02" db="EMBL/GenBank/DDBJ databases">
        <title>Complete sequence of chromosome of Shewanella baltica OS155.</title>
        <authorList>
            <consortium name="US DOE Joint Genome Institute"/>
            <person name="Copeland A."/>
            <person name="Lucas S."/>
            <person name="Lapidus A."/>
            <person name="Barry K."/>
            <person name="Detter J.C."/>
            <person name="Glavina del Rio T."/>
            <person name="Hammon N."/>
            <person name="Israni S."/>
            <person name="Dalin E."/>
            <person name="Tice H."/>
            <person name="Pitluck S."/>
            <person name="Sims D.R."/>
            <person name="Brettin T."/>
            <person name="Bruce D."/>
            <person name="Han C."/>
            <person name="Tapia R."/>
            <person name="Brainard J."/>
            <person name="Schmutz J."/>
            <person name="Larimer F."/>
            <person name="Land M."/>
            <person name="Hauser L."/>
            <person name="Kyrpides N."/>
            <person name="Mikhailova N."/>
            <person name="Brettar I."/>
            <person name="Klappenbach J."/>
            <person name="Konstantinidis K."/>
            <person name="Rodrigues J."/>
            <person name="Tiedje J."/>
            <person name="Richardson P."/>
        </authorList>
    </citation>
    <scope>NUCLEOTIDE SEQUENCE [LARGE SCALE GENOMIC DNA]</scope>
    <source>
        <strain>OS155 / ATCC BAA-1091</strain>
    </source>
</reference>
<organism>
    <name type="scientific">Shewanella baltica (strain OS155 / ATCC BAA-1091)</name>
    <dbReference type="NCBI Taxonomy" id="325240"/>
    <lineage>
        <taxon>Bacteria</taxon>
        <taxon>Pseudomonadati</taxon>
        <taxon>Pseudomonadota</taxon>
        <taxon>Gammaproteobacteria</taxon>
        <taxon>Alteromonadales</taxon>
        <taxon>Shewanellaceae</taxon>
        <taxon>Shewanella</taxon>
    </lineage>
</organism>
<evidence type="ECO:0000255" key="1">
    <source>
        <dbReference type="HAMAP-Rule" id="MF_01454"/>
    </source>
</evidence>
<evidence type="ECO:0000255" key="2">
    <source>
        <dbReference type="PROSITE-ProRule" id="PRU01231"/>
    </source>
</evidence>
<accession>A3D180</accession>
<feature type="chain" id="PRO_0000386236" description="GTPase Obg">
    <location>
        <begin position="1"/>
        <end position="389"/>
    </location>
</feature>
<feature type="domain" description="Obg" evidence="2">
    <location>
        <begin position="1"/>
        <end position="159"/>
    </location>
</feature>
<feature type="domain" description="OBG-type G" evidence="1">
    <location>
        <begin position="160"/>
        <end position="333"/>
    </location>
</feature>
<feature type="binding site" evidence="1">
    <location>
        <begin position="166"/>
        <end position="173"/>
    </location>
    <ligand>
        <name>GTP</name>
        <dbReference type="ChEBI" id="CHEBI:37565"/>
    </ligand>
</feature>
<feature type="binding site" evidence="1">
    <location>
        <position position="173"/>
    </location>
    <ligand>
        <name>Mg(2+)</name>
        <dbReference type="ChEBI" id="CHEBI:18420"/>
    </ligand>
</feature>
<feature type="binding site" evidence="1">
    <location>
        <begin position="191"/>
        <end position="195"/>
    </location>
    <ligand>
        <name>GTP</name>
        <dbReference type="ChEBI" id="CHEBI:37565"/>
    </ligand>
</feature>
<feature type="binding site" evidence="1">
    <location>
        <position position="193"/>
    </location>
    <ligand>
        <name>Mg(2+)</name>
        <dbReference type="ChEBI" id="CHEBI:18420"/>
    </ligand>
</feature>
<feature type="binding site" evidence="1">
    <location>
        <begin position="213"/>
        <end position="216"/>
    </location>
    <ligand>
        <name>GTP</name>
        <dbReference type="ChEBI" id="CHEBI:37565"/>
    </ligand>
</feature>
<feature type="binding site" evidence="1">
    <location>
        <begin position="283"/>
        <end position="286"/>
    </location>
    <ligand>
        <name>GTP</name>
        <dbReference type="ChEBI" id="CHEBI:37565"/>
    </ligand>
</feature>
<feature type="binding site" evidence="1">
    <location>
        <begin position="314"/>
        <end position="316"/>
    </location>
    <ligand>
        <name>GTP</name>
        <dbReference type="ChEBI" id="CHEBI:37565"/>
    </ligand>
</feature>